<evidence type="ECO:0000255" key="1"/>
<evidence type="ECO:0000305" key="2"/>
<keyword id="KW-1185">Reference proteome</keyword>
<keyword id="KW-0732">Signal</keyword>
<accession>P32688</accession>
<accession>Q2M6S6</accession>
<gene>
    <name type="primary">yjbG</name>
    <name type="ordered locus">b4028</name>
    <name type="ordered locus">JW3988</name>
</gene>
<comment type="similarity">
    <text evidence="2">To E.coli YmcB.</text>
</comment>
<dbReference type="EMBL" id="U00006">
    <property type="protein sequence ID" value="AAC43122.1"/>
    <property type="molecule type" value="Genomic_DNA"/>
</dbReference>
<dbReference type="EMBL" id="U00096">
    <property type="protein sequence ID" value="AAC76998.1"/>
    <property type="molecule type" value="Genomic_DNA"/>
</dbReference>
<dbReference type="EMBL" id="AP009048">
    <property type="protein sequence ID" value="BAE78030.1"/>
    <property type="molecule type" value="Genomic_DNA"/>
</dbReference>
<dbReference type="PIR" id="C65210">
    <property type="entry name" value="C65210"/>
</dbReference>
<dbReference type="RefSeq" id="NP_418452.1">
    <property type="nucleotide sequence ID" value="NC_000913.3"/>
</dbReference>
<dbReference type="RefSeq" id="WP_000595558.1">
    <property type="nucleotide sequence ID" value="NZ_SSZK01000049.1"/>
</dbReference>
<dbReference type="SMR" id="P32688"/>
<dbReference type="BioGRID" id="4261783">
    <property type="interactions" value="6"/>
</dbReference>
<dbReference type="FunCoup" id="P32688">
    <property type="interactions" value="94"/>
</dbReference>
<dbReference type="STRING" id="511145.b4028"/>
<dbReference type="PaxDb" id="511145-b4028"/>
<dbReference type="EnsemblBacteria" id="AAC76998">
    <property type="protein sequence ID" value="AAC76998"/>
    <property type="gene ID" value="b4028"/>
</dbReference>
<dbReference type="GeneID" id="948526"/>
<dbReference type="KEGG" id="ecj:JW3988"/>
<dbReference type="KEGG" id="eco:b4028"/>
<dbReference type="KEGG" id="ecoc:C3026_21755"/>
<dbReference type="PATRIC" id="fig|511145.12.peg.4141"/>
<dbReference type="EchoBASE" id="EB1869"/>
<dbReference type="eggNOG" id="ENOG502ZAUX">
    <property type="taxonomic scope" value="Bacteria"/>
</dbReference>
<dbReference type="HOGENOM" id="CLU_080984_2_0_6"/>
<dbReference type="InParanoid" id="P32688"/>
<dbReference type="OMA" id="RQPIAYW"/>
<dbReference type="OrthoDB" id="5592890at2"/>
<dbReference type="PhylomeDB" id="P32688"/>
<dbReference type="BioCyc" id="EcoCyc:EG11925-MONOMER"/>
<dbReference type="PRO" id="PR:P32688"/>
<dbReference type="Proteomes" id="UP000000625">
    <property type="component" value="Chromosome"/>
</dbReference>
<dbReference type="FunFam" id="3.10.20.700:FF:000001">
    <property type="entry name" value="Group 4 capsule (G4C) polysaccharide, YmcB"/>
    <property type="match status" value="1"/>
</dbReference>
<dbReference type="Gene3D" id="3.10.20.700">
    <property type="match status" value="1"/>
</dbReference>
<dbReference type="Gene3D" id="3.10.560.10">
    <property type="entry name" value="Outer membrane lipoprotein wza domain like"/>
    <property type="match status" value="1"/>
</dbReference>
<dbReference type="InterPro" id="IPR046459">
    <property type="entry name" value="Caps_syn_GfcC_N"/>
</dbReference>
<dbReference type="InterPro" id="IPR010425">
    <property type="entry name" value="Caps_synth_GfcC-like_C"/>
</dbReference>
<dbReference type="Pfam" id="PF06251">
    <property type="entry name" value="Caps_syn_GfcC_C"/>
    <property type="match status" value="1"/>
</dbReference>
<dbReference type="Pfam" id="PF20616">
    <property type="entry name" value="Caps_syn_GfcC_N"/>
    <property type="match status" value="1"/>
</dbReference>
<feature type="signal peptide" evidence="1">
    <location>
        <begin position="1"/>
        <end position="20"/>
    </location>
</feature>
<feature type="chain" id="PRO_0000013938" description="Uncharacterized protein YjbG">
    <location>
        <begin position="21"/>
        <end position="245"/>
    </location>
</feature>
<reference key="1">
    <citation type="journal article" date="1993" name="Nucleic Acids Res.">
        <title>Analysis of the Escherichia coli genome. IV. DNA sequence of the region from 89.2 to 92.8 minutes.</title>
        <authorList>
            <person name="Blattner F.R."/>
            <person name="Burland V.D."/>
            <person name="Plunkett G. III"/>
            <person name="Sofia H.J."/>
            <person name="Daniels D.L."/>
        </authorList>
    </citation>
    <scope>NUCLEOTIDE SEQUENCE [LARGE SCALE GENOMIC DNA]</scope>
    <source>
        <strain>K12 / MG1655 / ATCC 47076</strain>
    </source>
</reference>
<reference key="2">
    <citation type="journal article" date="1997" name="Science">
        <title>The complete genome sequence of Escherichia coli K-12.</title>
        <authorList>
            <person name="Blattner F.R."/>
            <person name="Plunkett G. III"/>
            <person name="Bloch C.A."/>
            <person name="Perna N.T."/>
            <person name="Burland V."/>
            <person name="Riley M."/>
            <person name="Collado-Vides J."/>
            <person name="Glasner J.D."/>
            <person name="Rode C.K."/>
            <person name="Mayhew G.F."/>
            <person name="Gregor J."/>
            <person name="Davis N.W."/>
            <person name="Kirkpatrick H.A."/>
            <person name="Goeden M.A."/>
            <person name="Rose D.J."/>
            <person name="Mau B."/>
            <person name="Shao Y."/>
        </authorList>
    </citation>
    <scope>NUCLEOTIDE SEQUENCE [LARGE SCALE GENOMIC DNA]</scope>
    <source>
        <strain>K12 / MG1655 / ATCC 47076</strain>
    </source>
</reference>
<reference key="3">
    <citation type="journal article" date="2006" name="Mol. Syst. Biol.">
        <title>Highly accurate genome sequences of Escherichia coli K-12 strains MG1655 and W3110.</title>
        <authorList>
            <person name="Hayashi K."/>
            <person name="Morooka N."/>
            <person name="Yamamoto Y."/>
            <person name="Fujita K."/>
            <person name="Isono K."/>
            <person name="Choi S."/>
            <person name="Ohtsubo E."/>
            <person name="Baba T."/>
            <person name="Wanner B.L."/>
            <person name="Mori H."/>
            <person name="Horiuchi T."/>
        </authorList>
    </citation>
    <scope>NUCLEOTIDE SEQUENCE [LARGE SCALE GENOMIC DNA]</scope>
    <source>
        <strain>K12 / W3110 / ATCC 27325 / DSM 5911</strain>
    </source>
</reference>
<proteinExistence type="inferred from homology"/>
<protein>
    <recommendedName>
        <fullName>Uncharacterized protein YjbG</fullName>
    </recommendedName>
</protein>
<sequence>MIKQTIVALLLSVGASSVFAAGTVKVFSNGSSEAKTLTGAEHLIDLVGQPRLANSWWPGAVISEELATAAALRQQQALLTRLAEQGADSSADDAAAINALRQQIQALKVTGRQKINLDPDIVRVAERGNPPLQGNYTLWVGPPPSTVTLFGLISRPGKQPFTPGRDVASYLSDQSLLSGADRSYAWVVYPDGRTQKAPVAYWNKRHVEPMPGSIIYVGLADSVWSETPDALNADILQTLTQRIPQ</sequence>
<name>YJBG_ECOLI</name>
<organism>
    <name type="scientific">Escherichia coli (strain K12)</name>
    <dbReference type="NCBI Taxonomy" id="83333"/>
    <lineage>
        <taxon>Bacteria</taxon>
        <taxon>Pseudomonadati</taxon>
        <taxon>Pseudomonadota</taxon>
        <taxon>Gammaproteobacteria</taxon>
        <taxon>Enterobacterales</taxon>
        <taxon>Enterobacteriaceae</taxon>
        <taxon>Escherichia</taxon>
    </lineage>
</organism>